<comment type="function">
    <text evidence="1 2">Coreceptor for bacterial lipopolysaccharide. In concert with LBP, binds to monomeric lipopolysaccharide and delivers it to the LY96/TLR4 complex, thereby mediating the innate immune response to bacterial lipopolysaccharide (LPS). Acts via MyD88, TIRAP and TRAF6, leading to NF-kappa-B activation, cytokine secretion and the inflammatory response. Acts as a coreceptor for TLR2:TLR6 heterodimer in response to diacylated lipopeptides and for TLR2:TLR1 heterodimer in response to triacylated lipopeptides, these clusters trigger signaling from the cell surface and subsequently are targeted to the Golgi in a lipid-raft dependent pathway. Binds electronegative LDL (LDL(-)) and mediates the cytokine release induced by LDL(-) (By similarity).</text>
</comment>
<comment type="subunit">
    <text evidence="1 2">Belongs to the lipopolysaccharide (LPS) receptor, a multi-protein complex containing at least CD14, LY96 and TLR4. Interacts with LPS-bound LPB. Interacts with LPAR1. Interacts with the TLR2:TLR6 or TLR2:TLR1 heterodimers; upon interaction with ligands such as diacylated lipopeptides and triacylated lipopeptides, respectively. Interacts with MYO18A. Interacts with FSTL1.</text>
</comment>
<comment type="subcellular location">
    <subcellularLocation>
        <location evidence="1">Cell membrane</location>
        <topology evidence="1">Lipid-anchor</topology>
        <topology evidence="1">GPI-anchor</topology>
    </subcellularLocation>
    <subcellularLocation>
        <location evidence="1">Secreted</location>
    </subcellularLocation>
    <subcellularLocation>
        <location evidence="1">Membrane raft</location>
    </subcellularLocation>
    <subcellularLocation>
        <location evidence="1">Golgi apparatus</location>
    </subcellularLocation>
    <text evidence="1">Soluble, secreted forms seem to exist. They may arise by cleavage of the GPI anchor.</text>
</comment>
<comment type="tissue specificity">
    <text evidence="4 5">Detected in lung (PubMed:8643545, PubMed:9300371). Detected in brain and kidney (PubMed:9300371). Detected in trachea and bone marrow (PubMed:8643545).</text>
</comment>
<comment type="induction">
    <text evidence="5">Up-regulated in peripheral blood monocytes exposed to bacterial lipopolysaccharide (LPS).</text>
</comment>
<comment type="domain">
    <text evidence="2">The C-terminal leucine-rich repeat (LRR) region is required for responses to smooth LPS.</text>
</comment>
<dbReference type="EMBL" id="D84509">
    <property type="protein sequence ID" value="BAA21517.1"/>
    <property type="molecule type" value="Genomic_DNA"/>
</dbReference>
<dbReference type="EMBL" id="AF141313">
    <property type="protein sequence ID" value="AAD32215.1"/>
    <property type="molecule type" value="mRNA"/>
</dbReference>
<dbReference type="EMBL" id="EU148609">
    <property type="protein sequence ID" value="ABV68569.1"/>
    <property type="molecule type" value="Genomic_DNA"/>
</dbReference>
<dbReference type="EMBL" id="EU148610">
    <property type="protein sequence ID" value="ABV68570.1"/>
    <property type="molecule type" value="Genomic_DNA"/>
</dbReference>
<dbReference type="EMBL" id="U48356">
    <property type="protein sequence ID" value="AAB07861.1"/>
    <property type="molecule type" value="mRNA"/>
</dbReference>
<dbReference type="RefSeq" id="NP_776433.1">
    <property type="nucleotide sequence ID" value="NM_174008.1"/>
</dbReference>
<dbReference type="SMR" id="Q95122"/>
<dbReference type="FunCoup" id="Q95122">
    <property type="interactions" value="825"/>
</dbReference>
<dbReference type="STRING" id="9913.ENSBTAP00000020009"/>
<dbReference type="GlyCosmos" id="Q95122">
    <property type="glycosylation" value="3 sites, No reported glycans"/>
</dbReference>
<dbReference type="GlyGen" id="Q95122">
    <property type="glycosylation" value="3 sites"/>
</dbReference>
<dbReference type="PaxDb" id="9913-ENSBTAP00000020009"/>
<dbReference type="PeptideAtlas" id="Q95122"/>
<dbReference type="GeneID" id="281048"/>
<dbReference type="KEGG" id="bta:281048"/>
<dbReference type="CTD" id="929"/>
<dbReference type="eggNOG" id="ENOG502SNYQ">
    <property type="taxonomic scope" value="Eukaryota"/>
</dbReference>
<dbReference type="InParanoid" id="Q95122"/>
<dbReference type="OrthoDB" id="676979at2759"/>
<dbReference type="Proteomes" id="UP000009136">
    <property type="component" value="Unplaced"/>
</dbReference>
<dbReference type="GO" id="GO:0009897">
    <property type="term" value="C:external side of plasma membrane"/>
    <property type="evidence" value="ECO:0000250"/>
    <property type="project" value="UniProtKB"/>
</dbReference>
<dbReference type="GO" id="GO:0005576">
    <property type="term" value="C:extracellular region"/>
    <property type="evidence" value="ECO:0007669"/>
    <property type="project" value="UniProtKB-SubCell"/>
</dbReference>
<dbReference type="GO" id="GO:0005794">
    <property type="term" value="C:Golgi apparatus"/>
    <property type="evidence" value="ECO:0000250"/>
    <property type="project" value="UniProtKB"/>
</dbReference>
<dbReference type="GO" id="GO:0046696">
    <property type="term" value="C:lipopolysaccharide receptor complex"/>
    <property type="evidence" value="ECO:0000250"/>
    <property type="project" value="UniProtKB"/>
</dbReference>
<dbReference type="GO" id="GO:0045121">
    <property type="term" value="C:membrane raft"/>
    <property type="evidence" value="ECO:0000250"/>
    <property type="project" value="UniProtKB"/>
</dbReference>
<dbReference type="GO" id="GO:0001530">
    <property type="term" value="F:lipopolysaccharide binding"/>
    <property type="evidence" value="ECO:0000318"/>
    <property type="project" value="GO_Central"/>
</dbReference>
<dbReference type="GO" id="GO:0071726">
    <property type="term" value="P:cellular response to diacyl bacterial lipopeptide"/>
    <property type="evidence" value="ECO:0000250"/>
    <property type="project" value="UniProtKB"/>
</dbReference>
<dbReference type="GO" id="GO:0071222">
    <property type="term" value="P:cellular response to lipopolysaccharide"/>
    <property type="evidence" value="ECO:0000250"/>
    <property type="project" value="UniProtKB"/>
</dbReference>
<dbReference type="GO" id="GO:0071727">
    <property type="term" value="P:cellular response to triacyl bacterial lipopeptide"/>
    <property type="evidence" value="ECO:0000250"/>
    <property type="project" value="UniProtKB"/>
</dbReference>
<dbReference type="GO" id="GO:0006954">
    <property type="term" value="P:inflammatory response"/>
    <property type="evidence" value="ECO:0007669"/>
    <property type="project" value="UniProtKB-KW"/>
</dbReference>
<dbReference type="GO" id="GO:0045087">
    <property type="term" value="P:innate immune response"/>
    <property type="evidence" value="ECO:0007669"/>
    <property type="project" value="UniProtKB-KW"/>
</dbReference>
<dbReference type="GO" id="GO:0001819">
    <property type="term" value="P:positive regulation of cytokine production"/>
    <property type="evidence" value="ECO:0000318"/>
    <property type="project" value="GO_Central"/>
</dbReference>
<dbReference type="GO" id="GO:0031666">
    <property type="term" value="P:positive regulation of lipopolysaccharide-mediated signaling pathway"/>
    <property type="evidence" value="ECO:0000250"/>
    <property type="project" value="UniProtKB"/>
</dbReference>
<dbReference type="GO" id="GO:0034145">
    <property type="term" value="P:positive regulation of toll-like receptor 4 signaling pathway"/>
    <property type="evidence" value="ECO:0000250"/>
    <property type="project" value="UniProtKB"/>
</dbReference>
<dbReference type="GO" id="GO:0032760">
    <property type="term" value="P:positive regulation of tumor necrosis factor production"/>
    <property type="evidence" value="ECO:0000250"/>
    <property type="project" value="UniProtKB"/>
</dbReference>
<dbReference type="GO" id="GO:0032729">
    <property type="term" value="P:positive regulation of type II interferon production"/>
    <property type="evidence" value="ECO:0000250"/>
    <property type="project" value="UniProtKB"/>
</dbReference>
<dbReference type="GO" id="GO:0009617">
    <property type="term" value="P:response to bacterium"/>
    <property type="evidence" value="ECO:0000250"/>
    <property type="project" value="UniProtKB"/>
</dbReference>
<dbReference type="GO" id="GO:0034142">
    <property type="term" value="P:toll-like receptor 4 signaling pathway"/>
    <property type="evidence" value="ECO:0000318"/>
    <property type="project" value="GO_Central"/>
</dbReference>
<dbReference type="FunFam" id="3.80.10.10:FF:000244">
    <property type="entry name" value="Monocyte differentiation antigen CD14"/>
    <property type="match status" value="1"/>
</dbReference>
<dbReference type="Gene3D" id="3.80.10.10">
    <property type="entry name" value="Ribonuclease Inhibitor"/>
    <property type="match status" value="1"/>
</dbReference>
<dbReference type="InterPro" id="IPR001611">
    <property type="entry name" value="Leu-rich_rpt"/>
</dbReference>
<dbReference type="InterPro" id="IPR032675">
    <property type="entry name" value="LRR_dom_sf"/>
</dbReference>
<dbReference type="InterPro" id="IPR016337">
    <property type="entry name" value="Monocyte_diff_Ag_CD14"/>
</dbReference>
<dbReference type="PANTHER" id="PTHR10630">
    <property type="entry name" value="MONOCYTE DIFFERENTIATION ANTIGEN CD14"/>
    <property type="match status" value="1"/>
</dbReference>
<dbReference type="PANTHER" id="PTHR10630:SF3">
    <property type="entry name" value="MONOCYTE DIFFERENTIATION ANTIGEN CD14"/>
    <property type="match status" value="1"/>
</dbReference>
<dbReference type="Pfam" id="PF13516">
    <property type="entry name" value="LRR_6"/>
    <property type="match status" value="1"/>
</dbReference>
<dbReference type="PIRSF" id="PIRSF002017">
    <property type="entry name" value="CD14"/>
    <property type="match status" value="1"/>
</dbReference>
<dbReference type="SUPFAM" id="SSF52047">
    <property type="entry name" value="RNI-like"/>
    <property type="match status" value="1"/>
</dbReference>
<dbReference type="PROSITE" id="PS51450">
    <property type="entry name" value="LRR"/>
    <property type="match status" value="3"/>
</dbReference>
<keyword id="KW-1003">Cell membrane</keyword>
<keyword id="KW-1015">Disulfide bond</keyword>
<keyword id="KW-0325">Glycoprotein</keyword>
<keyword id="KW-0333">Golgi apparatus</keyword>
<keyword id="KW-0336">GPI-anchor</keyword>
<keyword id="KW-0391">Immunity</keyword>
<keyword id="KW-0395">Inflammatory response</keyword>
<keyword id="KW-0399">Innate immunity</keyword>
<keyword id="KW-0433">Leucine-rich repeat</keyword>
<keyword id="KW-0449">Lipoprotein</keyword>
<keyword id="KW-0472">Membrane</keyword>
<keyword id="KW-1185">Reference proteome</keyword>
<keyword id="KW-0677">Repeat</keyword>
<keyword id="KW-0964">Secreted</keyword>
<keyword id="KW-0732">Signal</keyword>
<name>CD14_BOVIN</name>
<reference key="1">
    <citation type="journal article" date="1997" name="J. Vet. Med. Sci.">
        <title>Molecular cloning of bovine CD14 gene.</title>
        <authorList>
            <person name="Ikeda A."/>
            <person name="Takata M."/>
            <person name="Taniguchi T."/>
            <person name="Sekikawa K."/>
        </authorList>
    </citation>
    <scope>NUCLEOTIDE SEQUENCE [GENOMIC DNA]</scope>
    <scope>TISSUE SPECIFICITY</scope>
    <scope>INDUCTION BY BACTERIAL LIPOPOLYSACCHARIDE</scope>
    <source>
        <strain>Holstein</strain>
    </source>
</reference>
<reference key="2">
    <citation type="submission" date="1999-04" db="EMBL/GenBank/DDBJ databases">
        <title>Cloning of cDNA for bovine CD14.</title>
        <authorList>
            <person name="Filipp D."/>
            <person name="Julius M.J."/>
        </authorList>
    </citation>
    <scope>NUCLEOTIDE SEQUENCE [MRNA]</scope>
    <source>
        <strain>Holstein-Friesian</strain>
    </source>
</reference>
<reference key="3">
    <citation type="submission" date="2007-09" db="EMBL/GenBank/DDBJ databases">
        <title>Genetic mutations in the CD14 gene of cattle and relationship with the percentage of surface CD14-bound monocytes and neutrophils in healthy dairy cows.</title>
        <authorList>
            <person name="Ibeagha-Awemu E.M."/>
            <person name="Lee J.-W."/>
            <person name="Ibeagha A.E."/>
            <person name="Zhao X."/>
        </authorList>
    </citation>
    <scope>NUCLEOTIDE SEQUENCE [GENOMIC DNA]</scope>
</reference>
<reference key="4">
    <citation type="journal article" date="1996" name="Proc. Natl. Acad. Sci. U.S.A.">
        <title>Inducible expression of an antibiotic peptide gene in lipopolysaccharide-challenged tracheal epithelial cells.</title>
        <authorList>
            <person name="Diamond G."/>
            <person name="Russell J.P."/>
            <person name="Bevins C.L."/>
        </authorList>
    </citation>
    <scope>NUCLEOTIDE SEQUENCE [MRNA] OF 179-278</scope>
    <scope>TISSUE SPECIFICITY</scope>
</reference>
<sequence length="373" mass="39667">MVCVPYLLLLLLPSLLRVSADTTEPCELDDDDFRCVCNFTDPKPDWSSAVQCMVAVEVEISAGGRSLEQFLKGADTNPKQYADTIKALRVRRLKLGAAQVPAQLLVAVLRALGYSRLKELTLEDLEVTGPTPPTPLEAAGPALTTLSLRNVSWTTGGAWLGELQQWLKPGLRVLNIAQAHSLAFPCAGLSTFEALTTLDLSDNPSLGDSGLMAALCPNKFPALQYLALRNAGMETPSGVCAALAAARVQPQSLDLSHNSLRVTAPGATRCVWPSALRSLNLSFAGLEQVPKGLPPKLSVLDLSCNKLSREPRRDELPEVNDLTLDGNPFLDPGALQHQNDPMISGVVPACARSALTMGVSGALALLQGARGFA</sequence>
<accession>Q95122</accession>
<accession>A8DBS7</accession>
<accession>Q9TVA7</accession>
<protein>
    <recommendedName>
        <fullName>Monocyte differentiation antigen CD14</fullName>
    </recommendedName>
    <alternativeName>
        <fullName>Myeloid cell-specific leucine-rich glycoprotein</fullName>
    </alternativeName>
    <cdAntigenName>CD14</cdAntigenName>
</protein>
<feature type="signal peptide" evidence="3">
    <location>
        <begin position="1"/>
        <end position="20"/>
    </location>
</feature>
<feature type="chain" id="PRO_0000020883" description="Monocyte differentiation antigen CD14">
    <location>
        <begin position="21"/>
        <end position="373"/>
    </location>
</feature>
<feature type="repeat" description="LRR 1">
    <location>
        <begin position="55"/>
        <end position="81"/>
    </location>
</feature>
<feature type="repeat" description="LRR 2">
    <location>
        <begin position="82"/>
        <end position="117"/>
    </location>
</feature>
<feature type="repeat" description="LRR 3">
    <location>
        <begin position="118"/>
        <end position="143"/>
    </location>
</feature>
<feature type="repeat" description="LRR 4">
    <location>
        <begin position="144"/>
        <end position="171"/>
    </location>
</feature>
<feature type="repeat" description="LRR 5">
    <location>
        <begin position="172"/>
        <end position="195"/>
    </location>
</feature>
<feature type="repeat" description="LRR 6">
    <location>
        <begin position="196"/>
        <end position="223"/>
    </location>
</feature>
<feature type="repeat" description="LRR 7">
    <location>
        <begin position="224"/>
        <end position="250"/>
    </location>
</feature>
<feature type="repeat" description="LRR 8">
    <location>
        <begin position="251"/>
        <end position="276"/>
    </location>
</feature>
<feature type="repeat" description="LRR 9">
    <location>
        <begin position="277"/>
        <end position="297"/>
    </location>
</feature>
<feature type="repeat" description="LRR 10">
    <location>
        <begin position="298"/>
        <end position="319"/>
    </location>
</feature>
<feature type="repeat" description="LRR 11">
    <location>
        <begin position="320"/>
        <end position="347"/>
    </location>
</feature>
<feature type="region of interest" description="Required for response to bacterial lipopolysaccharide (LPS)" evidence="2">
    <location>
        <begin position="288"/>
        <end position="373"/>
    </location>
</feature>
<feature type="glycosylation site" description="N-linked (GlcNAc...) asparagine" evidence="3">
    <location>
        <position position="38"/>
    </location>
</feature>
<feature type="glycosylation site" description="N-linked (GlcNAc...) asparagine" evidence="3">
    <location>
        <position position="150"/>
    </location>
</feature>
<feature type="glycosylation site" description="N-linked (GlcNAc...) asparagine" evidence="3">
    <location>
        <position position="280"/>
    </location>
</feature>
<feature type="disulfide bond" evidence="1">
    <location>
        <begin position="26"/>
        <end position="37"/>
    </location>
</feature>
<feature type="disulfide bond" evidence="1">
    <location>
        <begin position="35"/>
        <end position="52"/>
    </location>
</feature>
<feature type="disulfide bond" evidence="1">
    <location>
        <begin position="186"/>
        <end position="216"/>
    </location>
</feature>
<feature type="disulfide bond" evidence="1">
    <location>
        <begin position="240"/>
        <end position="270"/>
    </location>
</feature>
<feature type="sequence conflict" description="In Ref. 2; AAD32215." evidence="6" ref="2">
    <original>S</original>
    <variation>T</variation>
    <location>
        <position position="209"/>
    </location>
</feature>
<proteinExistence type="evidence at transcript level"/>
<gene>
    <name type="primary">CD14</name>
</gene>
<evidence type="ECO:0000250" key="1">
    <source>
        <dbReference type="UniProtKB" id="P08571"/>
    </source>
</evidence>
<evidence type="ECO:0000250" key="2">
    <source>
        <dbReference type="UniProtKB" id="P10810"/>
    </source>
</evidence>
<evidence type="ECO:0000255" key="3"/>
<evidence type="ECO:0000269" key="4">
    <source>
    </source>
</evidence>
<evidence type="ECO:0000269" key="5">
    <source>
    </source>
</evidence>
<evidence type="ECO:0000305" key="6"/>
<organism>
    <name type="scientific">Bos taurus</name>
    <name type="common">Bovine</name>
    <dbReference type="NCBI Taxonomy" id="9913"/>
    <lineage>
        <taxon>Eukaryota</taxon>
        <taxon>Metazoa</taxon>
        <taxon>Chordata</taxon>
        <taxon>Craniata</taxon>
        <taxon>Vertebrata</taxon>
        <taxon>Euteleostomi</taxon>
        <taxon>Mammalia</taxon>
        <taxon>Eutheria</taxon>
        <taxon>Laurasiatheria</taxon>
        <taxon>Artiodactyla</taxon>
        <taxon>Ruminantia</taxon>
        <taxon>Pecora</taxon>
        <taxon>Bovidae</taxon>
        <taxon>Bovinae</taxon>
        <taxon>Bos</taxon>
    </lineage>
</organism>